<accession>Q5G5D5</accession>
<organism>
    <name type="scientific">Mus musculus</name>
    <name type="common">Mouse</name>
    <dbReference type="NCBI Taxonomy" id="10090"/>
    <lineage>
        <taxon>Eukaryota</taxon>
        <taxon>Metazoa</taxon>
        <taxon>Chordata</taxon>
        <taxon>Craniata</taxon>
        <taxon>Vertebrata</taxon>
        <taxon>Euteleostomi</taxon>
        <taxon>Mammalia</taxon>
        <taxon>Eutheria</taxon>
        <taxon>Euarchontoglires</taxon>
        <taxon>Glires</taxon>
        <taxon>Rodentia</taxon>
        <taxon>Myomorpha</taxon>
        <taxon>Muroidea</taxon>
        <taxon>Muridae</taxon>
        <taxon>Murinae</taxon>
        <taxon>Mus</taxon>
        <taxon>Mus</taxon>
    </lineage>
</organism>
<protein>
    <recommendedName>
        <fullName evidence="12">Syncytin-A</fullName>
    </recommendedName>
    <component>
        <recommendedName>
            <fullName evidence="12">Surface protein</fullName>
            <shortName evidence="12">SU</shortName>
        </recommendedName>
    </component>
    <component>
        <recommendedName>
            <fullName evidence="12">Transmembrane protein</fullName>
            <shortName evidence="12">TM</shortName>
        </recommendedName>
    </component>
</protein>
<dbReference type="EMBL" id="AY849973">
    <property type="protein sequence ID" value="AAW62446.1"/>
    <property type="molecule type" value="Genomic_DNA"/>
</dbReference>
<dbReference type="EMBL" id="AC166938">
    <property type="status" value="NOT_ANNOTATED_CDS"/>
    <property type="molecule type" value="Genomic_DNA"/>
</dbReference>
<dbReference type="EMBL" id="BC138919">
    <property type="protein sequence ID" value="AAI38920.1"/>
    <property type="molecule type" value="mRNA"/>
</dbReference>
<dbReference type="CCDS" id="CCDS19721.1"/>
<dbReference type="RefSeq" id="NP_001013773.1">
    <property type="nucleotide sequence ID" value="NM_001013751.2"/>
</dbReference>
<dbReference type="RefSeq" id="XP_006504467.1">
    <property type="nucleotide sequence ID" value="XM_006504404.4"/>
</dbReference>
<dbReference type="RefSeq" id="XP_006504469.1">
    <property type="nucleotide sequence ID" value="XM_006504406.4"/>
</dbReference>
<dbReference type="RefSeq" id="XP_011239176.1">
    <property type="nucleotide sequence ID" value="XM_011240874.3"/>
</dbReference>
<dbReference type="RefSeq" id="XP_011239177.1">
    <property type="nucleotide sequence ID" value="XM_011240875.3"/>
</dbReference>
<dbReference type="RefSeq" id="XP_011239179.1">
    <property type="nucleotide sequence ID" value="XM_011240877.3"/>
</dbReference>
<dbReference type="RefSeq" id="XP_030110216.1">
    <property type="nucleotide sequence ID" value="XM_030254356.2"/>
</dbReference>
<dbReference type="RefSeq" id="XP_030110217.1">
    <property type="nucleotide sequence ID" value="XM_030254357.1"/>
</dbReference>
<dbReference type="SMR" id="Q5G5D5"/>
<dbReference type="STRING" id="10090.ENSMUSP00000116437"/>
<dbReference type="GlyCosmos" id="Q5G5D5">
    <property type="glycosylation" value="3 sites, No reported glycans"/>
</dbReference>
<dbReference type="GlyGen" id="Q5G5D5">
    <property type="glycosylation" value="3 sites"/>
</dbReference>
<dbReference type="PaxDb" id="10090-ENSMUSP00000116437"/>
<dbReference type="DNASU" id="214292"/>
<dbReference type="Ensembl" id="ENSMUST00000149604.5">
    <property type="protein sequence ID" value="ENSMUSP00000116437.4"/>
    <property type="gene ID" value="ENSMUSG00000085957.5"/>
</dbReference>
<dbReference type="GeneID" id="214292"/>
<dbReference type="KEGG" id="mmu:214292"/>
<dbReference type="UCSC" id="uc008zwk.2">
    <property type="organism name" value="mouse"/>
</dbReference>
<dbReference type="AGR" id="MGI:2684898"/>
<dbReference type="CTD" id="214292"/>
<dbReference type="MGI" id="MGI:2684898">
    <property type="gene designation" value="Syna"/>
</dbReference>
<dbReference type="VEuPathDB" id="HostDB:ENSMUSG00000085957"/>
<dbReference type="eggNOG" id="ENOG502SD08">
    <property type="taxonomic scope" value="Eukaryota"/>
</dbReference>
<dbReference type="GeneTree" id="ENSGT00940000163436"/>
<dbReference type="HOGENOM" id="CLU_506176_0_0_1"/>
<dbReference type="InParanoid" id="Q5G5D5"/>
<dbReference type="OMA" id="MYSARTL"/>
<dbReference type="OrthoDB" id="9838482at2759"/>
<dbReference type="PhylomeDB" id="Q5G5D5"/>
<dbReference type="TreeFam" id="TF332233"/>
<dbReference type="BioGRID-ORCS" id="214292">
    <property type="hits" value="5 hits in 77 CRISPR screens"/>
</dbReference>
<dbReference type="PRO" id="PR:Q5G5D5"/>
<dbReference type="Proteomes" id="UP000000589">
    <property type="component" value="Chromosome 5"/>
</dbReference>
<dbReference type="RNAct" id="Q5G5D5">
    <property type="molecule type" value="protein"/>
</dbReference>
<dbReference type="Bgee" id="ENSMUSG00000085957">
    <property type="expression patterns" value="Expressed in placenta and 48 other cell types or tissues"/>
</dbReference>
<dbReference type="GO" id="GO:0005886">
    <property type="term" value="C:plasma membrane"/>
    <property type="evidence" value="ECO:0007669"/>
    <property type="project" value="UniProtKB-SubCell"/>
</dbReference>
<dbReference type="GO" id="GO:0060711">
    <property type="term" value="P:labyrinthine layer development"/>
    <property type="evidence" value="ECO:0000315"/>
    <property type="project" value="MGI"/>
</dbReference>
<dbReference type="GO" id="GO:0007520">
    <property type="term" value="P:myoblast fusion"/>
    <property type="evidence" value="ECO:0000315"/>
    <property type="project" value="MGI"/>
</dbReference>
<dbReference type="GO" id="GO:0000768">
    <property type="term" value="P:syncytium formation by plasma membrane fusion"/>
    <property type="evidence" value="ECO:0000314"/>
    <property type="project" value="MGI"/>
</dbReference>
<dbReference type="CDD" id="cd09851">
    <property type="entry name" value="HTLV-1-like_HR1-HR2"/>
    <property type="match status" value="1"/>
</dbReference>
<dbReference type="Gene3D" id="1.10.287.210">
    <property type="match status" value="1"/>
</dbReference>
<dbReference type="InterPro" id="IPR018154">
    <property type="entry name" value="TLV/ENV_coat_polyprotein"/>
</dbReference>
<dbReference type="PANTHER" id="PTHR10424:SF60">
    <property type="entry name" value="HERV-H_2Q24.1 PROVIRUS ANCESTRAL ENV POLYPROTEIN-RELATED"/>
    <property type="match status" value="1"/>
</dbReference>
<dbReference type="PANTHER" id="PTHR10424">
    <property type="entry name" value="VIRAL ENVELOPE PROTEIN"/>
    <property type="match status" value="1"/>
</dbReference>
<dbReference type="Pfam" id="PF00429">
    <property type="entry name" value="TLV_coat"/>
    <property type="match status" value="1"/>
</dbReference>
<dbReference type="SUPFAM" id="SSF58069">
    <property type="entry name" value="Virus ectodomain"/>
    <property type="match status" value="1"/>
</dbReference>
<keyword id="KW-1003">Cell membrane</keyword>
<keyword id="KW-0165">Cleavage on pair of basic residues</keyword>
<keyword id="KW-0217">Developmental protein</keyword>
<keyword id="KW-1015">Disulfide bond</keyword>
<keyword id="KW-0895">ERV</keyword>
<keyword id="KW-0325">Glycoprotein</keyword>
<keyword id="KW-0472">Membrane</keyword>
<keyword id="KW-1185">Reference proteome</keyword>
<keyword id="KW-0732">Signal</keyword>
<keyword id="KW-0812">Transmembrane</keyword>
<keyword id="KW-1133">Transmembrane helix</keyword>
<evidence type="ECO:0000250" key="1">
    <source>
        <dbReference type="UniProtKB" id="P23064"/>
    </source>
</evidence>
<evidence type="ECO:0000250" key="2">
    <source>
        <dbReference type="UniProtKB" id="P60508"/>
    </source>
</evidence>
<evidence type="ECO:0000250" key="3">
    <source>
        <dbReference type="UniProtKB" id="Q9UQF0"/>
    </source>
</evidence>
<evidence type="ECO:0000255" key="4"/>
<evidence type="ECO:0000269" key="5">
    <source>
    </source>
</evidence>
<evidence type="ECO:0000269" key="6">
    <source>
    </source>
</evidence>
<evidence type="ECO:0000269" key="7">
    <source>
    </source>
</evidence>
<evidence type="ECO:0000269" key="8">
    <source>
    </source>
</evidence>
<evidence type="ECO:0000269" key="9">
    <source>
    </source>
</evidence>
<evidence type="ECO:0000269" key="10">
    <source>
    </source>
</evidence>
<evidence type="ECO:0000269" key="11">
    <source>
    </source>
</evidence>
<evidence type="ECO:0000303" key="12">
    <source>
    </source>
</evidence>
<evidence type="ECO:0000305" key="13"/>
<evidence type="ECO:0000305" key="14">
    <source>
    </source>
</evidence>
<evidence type="ECO:0000305" key="15">
    <source>
    </source>
</evidence>
<evidence type="ECO:0000312" key="16">
    <source>
        <dbReference type="EMBL" id="AAI38920.1"/>
    </source>
</evidence>
<evidence type="ECO:0000312" key="17">
    <source>
        <dbReference type="EMBL" id="AAW62446.1"/>
    </source>
</evidence>
<evidence type="ECO:0000312" key="18">
    <source>
        <dbReference type="MGI" id="MGI:2684898"/>
    </source>
</evidence>
<evidence type="ECO:0000312" key="19">
    <source>
        <dbReference type="Proteomes" id="UP000000589"/>
    </source>
</evidence>
<proteinExistence type="evidence at protein level"/>
<comment type="function">
    <text evidence="5 6 7 9 11">This endogenous retroviral envelope protein has retained its original fusogenic properties (PubMed:15644441, PubMed:17762178, PubMed:18077339, PubMed:19564597, PubMed:27589388). Together with Synb, participates in trophoblast fusion and the formation of a syncytium during placenta morphogenesis (PubMed:19564597). Syna is essential for placental development and is specifically required for formation of syncytiotrophoblast layer I (SynT-I) (PubMed:19564597). Promotes muscle myoblast fusion (PubMed:27589388). Does not have immunosuppressive activity (PubMed:18077339).</text>
</comment>
<comment type="subunit">
    <text evidence="3 14">The mature protein consists of a trimer of SU-TM heterodimers (Probable). The SU-TM heterodimers are attached by a labile interchain disulfide bond (By similarity).</text>
</comment>
<comment type="subcellular location">
    <molecule>Transmembrane protein</molecule>
    <subcellularLocation>
        <location evidence="15">Cell membrane</location>
        <topology evidence="13">Single-pass membrane protein</topology>
    </subcellularLocation>
</comment>
<comment type="subcellular location">
    <molecule>Surface protein</molecule>
    <subcellularLocation>
        <location evidence="13">Cell membrane</location>
        <topology evidence="13">Peripheral membrane protein</topology>
    </subcellularLocation>
    <text evidence="3">The surface protein is not anchored to the membrane, but localizes to the extracellular surface through its binding to TM.</text>
</comment>
<comment type="tissue specificity">
    <text evidence="5">Highly expressed in placenta where it localizes to syncytiotrophoblasts of the labyrinthine zona (PubMed:15644441). Specifically localizes to syncytiotrophoblast layer I (SynT-I) (PubMed:18448564). Also detected at very low levels in hippocampus, brain, testis and ovary (PubMed:15644441).</text>
</comment>
<comment type="developmental stage">
    <text evidence="5 8">Expressed in the placental labyrinth from stage 8.5 dpc onwards.</text>
</comment>
<comment type="PTM">
    <text evidence="3">Synthesized as an inactive precursor that is heavily N-glycosylated and processed likely by furin in the Golgi to yield the mature SU and TM proteins. The cleavage site between SU and TM requires the minimal sequence [KR]-X-[KR]-R.</text>
</comment>
<comment type="PTM">
    <text evidence="3">The CXXC motif is highly conserved across a broad range of retroviral envelope proteins. It is thought to participate in the formation of a labile disulfide bond possibly with the CX6CC motif present in the transmembrane protein. Isomerization of the intersubunit disulfide bond to an SU intrachain disulfide bond is thought to occur upon receptor recognition in order to allow membrane fusion.</text>
</comment>
<comment type="disruption phenotype">
    <text evidence="9 10">Embryonic lethal with no survival beyond stage 14.5 dpc (PubMed:19564597). Embryos show retarded growth but otherwise have no significant morphological defects (PubMed:19564597). Placental development is abnormal with significantly reduced vascularization of extraembryonic tissues (PubMed:19564597). In the placental labyrinth, there is an expansion of trophoblast cells which reduces available space for fetal blood vessels (PubMed:19564597). Trophoblast cells fail to fuse and form syncytiotrophoblast layer I (SynT-I), however development of syncytiotrophoblast layer II (SynT-II) is not significantly affected (PubMed:19564597). Double knockouts of Syna and Synb are embryonic lethal at stage 9.5 dpc to 10.5 dpc, indicating a more severe phenotype than the Syna single knockout (PubMed:22032925).</text>
</comment>
<comment type="miscellaneous">
    <text evidence="13">The mouse genome contains a high percentage of proviral-like elements, also called endogenous retroviruses (ERVs) that are the genomic traces of ancient infections of the germline by exogenous retroviruses. Although most of these elements are defective, some have conserved a functional envelope (env) gene, most probably diverted by the host for its benefit.</text>
</comment>
<comment type="similarity">
    <text evidence="13">Belongs to the gamma type-C retroviral envelope protein family.</text>
</comment>
<sequence length="617" mass="68657">MVRPWVFCLLLFPCSSAYSDSWMPLVNLTQHLLQEANSSFSSNCWVCLSIQTQRSLAMPAPLRTWTETPMKLRIMYSARTLSGPYPITDLERRLQNFQPLTPHSSFVNPDQRAIAFLQITSVTGILPILSRITSVRYPDDHVYESAQRPIWGSLSTQTILTSQAPLCISRFFKNSNHATFVGKLPASLCNHTFQLSPSANHQSIDLSSSYAFAPLMAMPGSKWRNPLRFSGPPSLNSGMPHYSCPIDDIHCHTYPTTPWRSCPSFPASTCYNLTLFEPDNSSHPITLSVDTTYFKIKLQGHKDPYPLFQYQPLMGAALSGQYSIWEYEPTVKKNGGITPNIFSHLVSLTYSFCLNSSGVFFLCGNSTYVCLPANWSGVCTLVFQYPDIELLPNNQTISVPLFATVPSSVPASRRKRALPLLPLLAGLGIASALGLGIAGITTSTVYFQQLSKALSDSLDEIATSIISLQDQIDSLAGVVLQNRRALDLIVAERGGTCLFLQEECCFYINQSGVVRHAARKLRERASELGTSSSSWIQWLGLGPWLPSWLTSLMAPILFILVLLVFRPCLLNCLTHSVSRRMSSFIHTTTEGHVDKILLLRESQYKRLPQEPPEEDAV</sequence>
<reference evidence="17" key="1">
    <citation type="journal article" date="2005" name="Proc. Natl. Acad. Sci. U.S.A.">
        <title>Syncytin-A and syncytin-B, two fusogenic placenta-specific murine envelope genes of retroviral origin conserved in Muridae.</title>
        <authorList>
            <person name="Dupressoir A."/>
            <person name="Marceau G."/>
            <person name="Vernochet C."/>
            <person name="Benit L."/>
            <person name="Kanellopoulos C."/>
            <person name="Sapin V."/>
            <person name="Heidmann T."/>
        </authorList>
    </citation>
    <scope>NUCLEOTIDE SEQUENCE [GENOMIC DNA]</scope>
    <scope>FUNCTION</scope>
    <scope>TISSUE SPECIFICITY</scope>
    <scope>DEVELOPMENTAL STAGE</scope>
    <source>
        <strain evidence="17">C57BL/6J</strain>
    </source>
</reference>
<reference evidence="19" key="2">
    <citation type="journal article" date="2009" name="PLoS Biol.">
        <title>Lineage-specific biology revealed by a finished genome assembly of the mouse.</title>
        <authorList>
            <person name="Church D.M."/>
            <person name="Goodstadt L."/>
            <person name="Hillier L.W."/>
            <person name="Zody M.C."/>
            <person name="Goldstein S."/>
            <person name="She X."/>
            <person name="Bult C.J."/>
            <person name="Agarwala R."/>
            <person name="Cherry J.L."/>
            <person name="DiCuccio M."/>
            <person name="Hlavina W."/>
            <person name="Kapustin Y."/>
            <person name="Meric P."/>
            <person name="Maglott D."/>
            <person name="Birtle Z."/>
            <person name="Marques A.C."/>
            <person name="Graves T."/>
            <person name="Zhou S."/>
            <person name="Teague B."/>
            <person name="Potamousis K."/>
            <person name="Churas C."/>
            <person name="Place M."/>
            <person name="Herschleb J."/>
            <person name="Runnheim R."/>
            <person name="Forrest D."/>
            <person name="Amos-Landgraf J."/>
            <person name="Schwartz D.C."/>
            <person name="Cheng Z."/>
            <person name="Lindblad-Toh K."/>
            <person name="Eichler E.E."/>
            <person name="Ponting C.P."/>
        </authorList>
    </citation>
    <scope>NUCLEOTIDE SEQUENCE [LARGE SCALE GENOMIC DNA]</scope>
    <source>
        <strain>C57BL/6J</strain>
    </source>
</reference>
<reference evidence="16" key="3">
    <citation type="journal article" date="2004" name="Genome Res.">
        <title>The status, quality, and expansion of the NIH full-length cDNA project: the Mammalian Gene Collection (MGC).</title>
        <authorList>
            <consortium name="The MGC Project Team"/>
        </authorList>
    </citation>
    <scope>NUCLEOTIDE SEQUENCE [LARGE SCALE MRNA]</scope>
    <source>
        <tissue>Brain</tissue>
    </source>
</reference>
<reference evidence="13" key="4">
    <citation type="journal article" date="2007" name="Cell. Physiol. Biochem.">
        <title>Syncytin-A mediates the formation of syncytiotrophoblast involved in mouse placental development.</title>
        <authorList>
            <person name="Gong R."/>
            <person name="Huang L."/>
            <person name="Shi J."/>
            <person name="Luo K."/>
            <person name="Qiu G."/>
            <person name="Feng H."/>
            <person name="Tien P."/>
            <person name="Xiao G."/>
        </authorList>
    </citation>
    <scope>FUNCTION</scope>
    <scope>SUBCELLULAR LOCATION</scope>
</reference>
<reference evidence="13" key="5">
    <citation type="journal article" date="2007" name="J. Biol. Chem.">
        <title>Functional characterization of syncytin-A, a newly murine endogenous virus envelope protein. Implication for its fusion mechanism.</title>
        <authorList>
            <person name="Peng X."/>
            <person name="Pan J."/>
            <person name="Gong R."/>
            <person name="Liu Y."/>
            <person name="Kang S."/>
            <person name="Feng H."/>
            <person name="Qiu G."/>
            <person name="Guo D."/>
            <person name="Tien P."/>
            <person name="Xiao G."/>
        </authorList>
    </citation>
    <scope>FUNCTION</scope>
    <scope>SUBUNIT</scope>
</reference>
<reference evidence="13" key="6">
    <citation type="journal article" date="2007" name="Proc. Natl. Acad. Sci. U.S.A.">
        <title>Placental syncytins: Genetic disjunction between the fusogenic and immunosuppressive activity of retroviral envelope proteins.</title>
        <authorList>
            <person name="Mangeney M."/>
            <person name="Renard M."/>
            <person name="Schlecht-Louf G."/>
            <person name="Bouallaga I."/>
            <person name="Heidmann O."/>
            <person name="Letzelter C."/>
            <person name="Richaud A."/>
            <person name="Ducos B."/>
            <person name="Heidmann T."/>
        </authorList>
    </citation>
    <scope>FUNCTION</scope>
    <scope>MUTAGENESIS OF ARG-493</scope>
</reference>
<reference evidence="13" key="7">
    <citation type="journal article" date="2008" name="Development">
        <title>Early patterning of the chorion leads to the trilaminar trophoblast cell structure in the placental labyrinth.</title>
        <authorList>
            <person name="Simmons D.G."/>
            <person name="Natale D.R."/>
            <person name="Begay V."/>
            <person name="Hughes M."/>
            <person name="Leutz A."/>
            <person name="Cross J.C."/>
        </authorList>
    </citation>
    <scope>TISSUE SPECIFICITY</scope>
    <scope>DEVELOPMENTAL STAGE</scope>
</reference>
<reference evidence="13" key="8">
    <citation type="journal article" date="2009" name="Proc. Natl. Acad. Sci. U.S.A.">
        <title>Syncytin-A knockout mice demonstrate the critical role in placentation of a fusogenic, endogenous retrovirus-derived, envelope gene.</title>
        <authorList>
            <person name="Dupressoir A."/>
            <person name="Vernochet C."/>
            <person name="Bawa O."/>
            <person name="Harper F."/>
            <person name="Pierron G."/>
            <person name="Opolon P."/>
            <person name="Heidmann T."/>
        </authorList>
    </citation>
    <scope>FUNCTION</scope>
    <scope>DISRUPTION PHENOTYPE</scope>
</reference>
<reference evidence="13" key="9">
    <citation type="journal article" date="2011" name="Proc. Natl. Acad. Sci. U.S.A.">
        <title>A pair of co-opted retroviral envelope syncytin genes is required for formation of the two-layered murine placental syncytiotrophoblast.</title>
        <authorList>
            <person name="Dupressoir A."/>
            <person name="Vernochet C."/>
            <person name="Harper F."/>
            <person name="Guegan J."/>
            <person name="Dessen P."/>
            <person name="Pierron G."/>
            <person name="Heidmann T."/>
        </authorList>
    </citation>
    <scope>DISRUPTION PHENOTYPE</scope>
</reference>
<reference evidence="13" key="10">
    <citation type="journal article" date="2016" name="PLoS Genet.">
        <title>Genetic evidence that captured retroviral envelope syncytins contribute to myoblast fusion and muscle sexual dimorphism in mice.</title>
        <authorList>
            <person name="Redelsperger F."/>
            <person name="Raddi N."/>
            <person name="Bacquin A."/>
            <person name="Vernochet C."/>
            <person name="Mariot V."/>
            <person name="Gache V."/>
            <person name="Blanchard-Gutton N."/>
            <person name="Charrin S."/>
            <person name="Tiret L."/>
            <person name="Dumonceaux J."/>
            <person name="Dupressoir A."/>
            <person name="Heidmann T."/>
        </authorList>
    </citation>
    <scope>FUNCTION</scope>
</reference>
<gene>
    <name evidence="18" type="primary">Syna</name>
</gene>
<feature type="signal peptide" evidence="4">
    <location>
        <begin position="1"/>
        <end position="17"/>
    </location>
</feature>
<feature type="chain" id="PRO_5009343953" description="Syncytin-A">
    <location>
        <begin position="18"/>
        <end position="617"/>
    </location>
</feature>
<feature type="chain" id="PRO_0000440573" description="Surface protein" evidence="13">
    <location>
        <begin position="18"/>
        <end position="416"/>
    </location>
</feature>
<feature type="chain" id="PRO_0000440574" description="Transmembrane protein" evidence="13">
    <location>
        <begin position="417"/>
        <end position="617"/>
    </location>
</feature>
<feature type="topological domain" description="Extracellular" evidence="13">
    <location>
        <begin position="18"/>
        <end position="544"/>
    </location>
</feature>
<feature type="transmembrane region" description="Helical" evidence="4">
    <location>
        <begin position="545"/>
        <end position="565"/>
    </location>
</feature>
<feature type="topological domain" description="Cytoplasmic" evidence="13">
    <location>
        <begin position="566"/>
        <end position="617"/>
    </location>
</feature>
<feature type="region of interest" description="Fusion peptide" evidence="13">
    <location>
        <begin position="420"/>
        <end position="440"/>
    </location>
</feature>
<feature type="short sequence motif" description="CXXC" evidence="13">
    <location>
        <begin position="44"/>
        <end position="47"/>
    </location>
</feature>
<feature type="short sequence motif" description="CX6CC" evidence="13">
    <location>
        <begin position="497"/>
        <end position="505"/>
    </location>
</feature>
<feature type="site" description="Cleavage" evidence="3">
    <location>
        <begin position="416"/>
        <end position="417"/>
    </location>
</feature>
<feature type="glycosylation site" description="N-linked (GlcNAc...) asparagine" evidence="4">
    <location>
        <position position="27"/>
    </location>
</feature>
<feature type="glycosylation site" description="N-linked (GlcNAc...) asparagine" evidence="4">
    <location>
        <position position="272"/>
    </location>
</feature>
<feature type="glycosylation site" description="N-linked (GlcNAc...) asparagine" evidence="4">
    <location>
        <position position="365"/>
    </location>
</feature>
<feature type="disulfide bond" description="Interchain (between SU and TM chains, or C-47 with C-505); in linked form" evidence="3">
    <location>
        <begin position="44"/>
        <end position="505"/>
    </location>
</feature>
<feature type="disulfide bond" evidence="1">
    <location>
        <begin position="44"/>
        <end position="47"/>
    </location>
</feature>
<feature type="disulfide bond" evidence="2">
    <location>
        <begin position="497"/>
        <end position="504"/>
    </location>
</feature>
<feature type="mutagenesis site" description="No effect on fusogenic activity. Confers immunosuppressive activity not found in the wild type protein." evidence="7">
    <original>R</original>
    <variation>K</variation>
    <location>
        <position position="493"/>
    </location>
</feature>
<name>SYNA_MOUSE</name>